<reference key="1">
    <citation type="journal article" date="2006" name="Proc. Natl. Acad. Sci. U.S.A.">
        <title>The complete genome sequence of Lactobacillus bulgaricus reveals extensive and ongoing reductive evolution.</title>
        <authorList>
            <person name="van de Guchte M."/>
            <person name="Penaud S."/>
            <person name="Grimaldi C."/>
            <person name="Barbe V."/>
            <person name="Bryson K."/>
            <person name="Nicolas P."/>
            <person name="Robert C."/>
            <person name="Oztas S."/>
            <person name="Mangenot S."/>
            <person name="Couloux A."/>
            <person name="Loux V."/>
            <person name="Dervyn R."/>
            <person name="Bossy R."/>
            <person name="Bolotin A."/>
            <person name="Batto J.-M."/>
            <person name="Walunas T."/>
            <person name="Gibrat J.-F."/>
            <person name="Bessieres P."/>
            <person name="Weissenbach J."/>
            <person name="Ehrlich S.D."/>
            <person name="Maguin E."/>
        </authorList>
    </citation>
    <scope>NUCLEOTIDE SEQUENCE [LARGE SCALE GENOMIC DNA]</scope>
    <source>
        <strain>ATCC 11842 / DSM 20081 / BCRC 10696 / JCM 1002 / NBRC 13953 / NCIMB 11778 / NCTC 12712 / WDCM 00102 / Lb 14</strain>
    </source>
</reference>
<accession>Q1GB07</accession>
<organism>
    <name type="scientific">Lactobacillus delbrueckii subsp. bulgaricus (strain ATCC 11842 / DSM 20081 / BCRC 10696 / JCM 1002 / NBRC 13953 / NCIMB 11778 / NCTC 12712 / WDCM 00102 / Lb 14)</name>
    <dbReference type="NCBI Taxonomy" id="390333"/>
    <lineage>
        <taxon>Bacteria</taxon>
        <taxon>Bacillati</taxon>
        <taxon>Bacillota</taxon>
        <taxon>Bacilli</taxon>
        <taxon>Lactobacillales</taxon>
        <taxon>Lactobacillaceae</taxon>
        <taxon>Lactobacillus</taxon>
    </lineage>
</organism>
<name>FLUC1_LACDA</name>
<gene>
    <name evidence="1" type="primary">fluC1</name>
    <name evidence="1" type="synonym">crcB1</name>
    <name type="ordered locus">Ldb0661</name>
</gene>
<sequence length="128" mass="13888">MDTVKNYLSVAFFAFWGGLARYGLTEAFSFYGTVIANLLGCFLLAFLTYFFLRKSNSRAWLTTGLGTGFVGAFTTFSSFNLDAFKLLLGGQNFGALLYFTGTIAAGFLFAWAGKQAANFAAGKLLERG</sequence>
<keyword id="KW-1003">Cell membrane</keyword>
<keyword id="KW-0407">Ion channel</keyword>
<keyword id="KW-0406">Ion transport</keyword>
<keyword id="KW-0472">Membrane</keyword>
<keyword id="KW-0479">Metal-binding</keyword>
<keyword id="KW-1185">Reference proteome</keyword>
<keyword id="KW-0915">Sodium</keyword>
<keyword id="KW-0812">Transmembrane</keyword>
<keyword id="KW-1133">Transmembrane helix</keyword>
<keyword id="KW-0813">Transport</keyword>
<evidence type="ECO:0000255" key="1">
    <source>
        <dbReference type="HAMAP-Rule" id="MF_00454"/>
    </source>
</evidence>
<dbReference type="EMBL" id="CR954253">
    <property type="protein sequence ID" value="CAI97490.1"/>
    <property type="molecule type" value="Genomic_DNA"/>
</dbReference>
<dbReference type="RefSeq" id="WP_011543743.1">
    <property type="nucleotide sequence ID" value="NC_008054.1"/>
</dbReference>
<dbReference type="SMR" id="Q1GB07"/>
<dbReference type="STRING" id="390333.Ldb0661"/>
<dbReference type="KEGG" id="ldb:Ldb0661"/>
<dbReference type="PATRIC" id="fig|390333.13.peg.138"/>
<dbReference type="eggNOG" id="COG0239">
    <property type="taxonomic scope" value="Bacteria"/>
</dbReference>
<dbReference type="HOGENOM" id="CLU_114342_1_2_9"/>
<dbReference type="BioCyc" id="LDEL390333:LDB_RS02860-MONOMER"/>
<dbReference type="Proteomes" id="UP000001259">
    <property type="component" value="Chromosome"/>
</dbReference>
<dbReference type="GO" id="GO:0005886">
    <property type="term" value="C:plasma membrane"/>
    <property type="evidence" value="ECO:0007669"/>
    <property type="project" value="UniProtKB-SubCell"/>
</dbReference>
<dbReference type="GO" id="GO:0062054">
    <property type="term" value="F:fluoride channel activity"/>
    <property type="evidence" value="ECO:0007669"/>
    <property type="project" value="UniProtKB-UniRule"/>
</dbReference>
<dbReference type="GO" id="GO:0046872">
    <property type="term" value="F:metal ion binding"/>
    <property type="evidence" value="ECO:0007669"/>
    <property type="project" value="UniProtKB-KW"/>
</dbReference>
<dbReference type="GO" id="GO:0140114">
    <property type="term" value="P:cellular detoxification of fluoride"/>
    <property type="evidence" value="ECO:0007669"/>
    <property type="project" value="UniProtKB-UniRule"/>
</dbReference>
<dbReference type="HAMAP" id="MF_00454">
    <property type="entry name" value="FluC"/>
    <property type="match status" value="1"/>
</dbReference>
<dbReference type="InterPro" id="IPR003691">
    <property type="entry name" value="FluC"/>
</dbReference>
<dbReference type="PANTHER" id="PTHR28259">
    <property type="entry name" value="FLUORIDE EXPORT PROTEIN 1-RELATED"/>
    <property type="match status" value="1"/>
</dbReference>
<dbReference type="PANTHER" id="PTHR28259:SF1">
    <property type="entry name" value="FLUORIDE EXPORT PROTEIN 1-RELATED"/>
    <property type="match status" value="1"/>
</dbReference>
<dbReference type="Pfam" id="PF02537">
    <property type="entry name" value="CRCB"/>
    <property type="match status" value="1"/>
</dbReference>
<feature type="chain" id="PRO_0000252890" description="Fluoride-specific ion channel FluC 1">
    <location>
        <begin position="1"/>
        <end position="128"/>
    </location>
</feature>
<feature type="transmembrane region" description="Helical" evidence="1">
    <location>
        <begin position="10"/>
        <end position="30"/>
    </location>
</feature>
<feature type="transmembrane region" description="Helical" evidence="1">
    <location>
        <begin position="32"/>
        <end position="52"/>
    </location>
</feature>
<feature type="transmembrane region" description="Helical" evidence="1">
    <location>
        <begin position="59"/>
        <end position="79"/>
    </location>
</feature>
<feature type="transmembrane region" description="Helical" evidence="1">
    <location>
        <begin position="93"/>
        <end position="113"/>
    </location>
</feature>
<feature type="binding site" evidence="1">
    <location>
        <position position="71"/>
    </location>
    <ligand>
        <name>Na(+)</name>
        <dbReference type="ChEBI" id="CHEBI:29101"/>
        <note>structural</note>
    </ligand>
</feature>
<feature type="binding site" evidence="1">
    <location>
        <position position="74"/>
    </location>
    <ligand>
        <name>Na(+)</name>
        <dbReference type="ChEBI" id="CHEBI:29101"/>
        <note>structural</note>
    </ligand>
</feature>
<comment type="function">
    <text evidence="1">Fluoride-specific ion channel. Important for reducing fluoride concentration in the cell, thus reducing its toxicity.</text>
</comment>
<comment type="catalytic activity">
    <reaction evidence="1">
        <text>fluoride(in) = fluoride(out)</text>
        <dbReference type="Rhea" id="RHEA:76159"/>
        <dbReference type="ChEBI" id="CHEBI:17051"/>
    </reaction>
    <physiologicalReaction direction="left-to-right" evidence="1">
        <dbReference type="Rhea" id="RHEA:76160"/>
    </physiologicalReaction>
</comment>
<comment type="activity regulation">
    <text evidence="1">Na(+) is not transported, but it plays an essential structural role and its presence is essential for fluoride channel function.</text>
</comment>
<comment type="subcellular location">
    <subcellularLocation>
        <location evidence="1">Cell membrane</location>
        <topology evidence="1">Multi-pass membrane protein</topology>
    </subcellularLocation>
</comment>
<comment type="similarity">
    <text evidence="1">Belongs to the fluoride channel Fluc/FEX (TC 1.A.43) family.</text>
</comment>
<protein>
    <recommendedName>
        <fullName evidence="1">Fluoride-specific ion channel FluC 1</fullName>
    </recommendedName>
</protein>
<proteinExistence type="inferred from homology"/>